<reference key="1">
    <citation type="journal article" date="2004" name="Nature">
        <title>Genome evolution in yeasts.</title>
        <authorList>
            <person name="Dujon B."/>
            <person name="Sherman D."/>
            <person name="Fischer G."/>
            <person name="Durrens P."/>
            <person name="Casaregola S."/>
            <person name="Lafontaine I."/>
            <person name="de Montigny J."/>
            <person name="Marck C."/>
            <person name="Neuveglise C."/>
            <person name="Talla E."/>
            <person name="Goffard N."/>
            <person name="Frangeul L."/>
            <person name="Aigle M."/>
            <person name="Anthouard V."/>
            <person name="Babour A."/>
            <person name="Barbe V."/>
            <person name="Barnay S."/>
            <person name="Blanchin S."/>
            <person name="Beckerich J.-M."/>
            <person name="Beyne E."/>
            <person name="Bleykasten C."/>
            <person name="Boisrame A."/>
            <person name="Boyer J."/>
            <person name="Cattolico L."/>
            <person name="Confanioleri F."/>
            <person name="de Daruvar A."/>
            <person name="Despons L."/>
            <person name="Fabre E."/>
            <person name="Fairhead C."/>
            <person name="Ferry-Dumazet H."/>
            <person name="Groppi A."/>
            <person name="Hantraye F."/>
            <person name="Hennequin C."/>
            <person name="Jauniaux N."/>
            <person name="Joyet P."/>
            <person name="Kachouri R."/>
            <person name="Kerrest A."/>
            <person name="Koszul R."/>
            <person name="Lemaire M."/>
            <person name="Lesur I."/>
            <person name="Ma L."/>
            <person name="Muller H."/>
            <person name="Nicaud J.-M."/>
            <person name="Nikolski M."/>
            <person name="Oztas S."/>
            <person name="Ozier-Kalogeropoulos O."/>
            <person name="Pellenz S."/>
            <person name="Potier S."/>
            <person name="Richard G.-F."/>
            <person name="Straub M.-L."/>
            <person name="Suleau A."/>
            <person name="Swennen D."/>
            <person name="Tekaia F."/>
            <person name="Wesolowski-Louvel M."/>
            <person name="Westhof E."/>
            <person name="Wirth B."/>
            <person name="Zeniou-Meyer M."/>
            <person name="Zivanovic Y."/>
            <person name="Bolotin-Fukuhara M."/>
            <person name="Thierry A."/>
            <person name="Bouchier C."/>
            <person name="Caudron B."/>
            <person name="Scarpelli C."/>
            <person name="Gaillardin C."/>
            <person name="Weissenbach J."/>
            <person name="Wincker P."/>
            <person name="Souciet J.-L."/>
        </authorList>
    </citation>
    <scope>NUCLEOTIDE SEQUENCE [LARGE SCALE GENOMIC DNA]</scope>
    <source>
        <strain>ATCC 2001 / BCRC 20586 / JCM 3761 / NBRC 0622 / NRRL Y-65 / CBS 138</strain>
    </source>
</reference>
<organism>
    <name type="scientific">Candida glabrata (strain ATCC 2001 / BCRC 20586 / JCM 3761 / NBRC 0622 / NRRL Y-65 / CBS 138)</name>
    <name type="common">Yeast</name>
    <name type="synonym">Nakaseomyces glabratus</name>
    <dbReference type="NCBI Taxonomy" id="284593"/>
    <lineage>
        <taxon>Eukaryota</taxon>
        <taxon>Fungi</taxon>
        <taxon>Dikarya</taxon>
        <taxon>Ascomycota</taxon>
        <taxon>Saccharomycotina</taxon>
        <taxon>Saccharomycetes</taxon>
        <taxon>Saccharomycetales</taxon>
        <taxon>Saccharomycetaceae</taxon>
        <taxon>Nakaseomyces</taxon>
    </lineage>
</organism>
<sequence length="525" mass="59716">MDLKTFGGRRNFVFRNWAGIYSSRPEWYFQPSSVDEVVEIVKAAKLKNKTIVTVGSGHSPSNMCVTDEWMMNLDKMNKLLDFVENEDKTYADVTIQGGTRLYKIHKILREKGYAMQSLGSISEQSIGGIISTGTHGSSPFHGLVSSTIVNLTVVNGKGEVLFLDEKSNPEVFRAATLSLGKIGIIVGATVRVVPAFNIKSTQEVIKFETLLEKWDSLWTSSEFIRIWWYPYTRKCILWRGVKTNEPQTKSRYSWWGSTLGRFFYQTLLFISTKIYPPLTPYVERFVFRRQYGEVETLGKGDVAIEDSVTGFNMDCLFSQFVDEWGCPMDNGLEVLRSLDHSIAQAAANKDFYVHVPVEVRCANTTLPKEQPETSFRSNTSRGPVYGNLLRPYLDNTPSQCSYAPIHSVTNSQLTLYINATIYRPFHTNAPIHKWFTLFEDTMSAAGGKPHWAKNFLGSTSFAQGQVKAEGQYQDYEMRGMATRVKEWYGSDLETFKKVRREQDPDNIFLANKQWALINGIIDENE</sequence>
<proteinExistence type="inferred from homology"/>
<comment type="catalytic activity">
    <reaction>
        <text>D-arabinono-1,4-lactone + O2 = dehydro-D-arabinono-1,4-lactone + H2O2 + H(+)</text>
        <dbReference type="Rhea" id="RHEA:23756"/>
        <dbReference type="ChEBI" id="CHEBI:15378"/>
        <dbReference type="ChEBI" id="CHEBI:15379"/>
        <dbReference type="ChEBI" id="CHEBI:16240"/>
        <dbReference type="ChEBI" id="CHEBI:16292"/>
        <dbReference type="ChEBI" id="CHEBI:58277"/>
        <dbReference type="EC" id="1.1.3.37"/>
    </reaction>
</comment>
<comment type="cofactor">
    <cofactor evidence="1">
        <name>FAD</name>
        <dbReference type="ChEBI" id="CHEBI:57692"/>
    </cofactor>
</comment>
<comment type="pathway">
    <text>Cofactor biosynthesis; D-erythroascorbate biosynthesis; dehydro-D-arabinono-1,4-lactone from D-arabinose: step 2/2.</text>
</comment>
<comment type="subcellular location">
    <subcellularLocation>
        <location evidence="1">Mitochondrion membrane</location>
    </subcellularLocation>
    <text evidence="1">Membrane-embedded.</text>
</comment>
<comment type="similarity">
    <text evidence="3">Belongs to the oxygen-dependent FAD-linked oxidoreductase family.</text>
</comment>
<evidence type="ECO:0000250" key="1"/>
<evidence type="ECO:0000255" key="2">
    <source>
        <dbReference type="PROSITE-ProRule" id="PRU00718"/>
    </source>
</evidence>
<evidence type="ECO:0000305" key="3"/>
<protein>
    <recommendedName>
        <fullName>D-arabinono-1,4-lactone oxidase</fullName>
        <shortName>ALO</shortName>
        <ecNumber>1.1.3.37</ecNumber>
    </recommendedName>
    <alternativeName>
        <fullName>L-galactono-gamma-lactone oxidase</fullName>
    </alternativeName>
</protein>
<feature type="chain" id="PRO_0000128165" description="D-arabinono-1,4-lactone oxidase">
    <location>
        <begin position="1"/>
        <end position="525"/>
    </location>
</feature>
<feature type="domain" description="FAD-binding PCMH-type" evidence="2">
    <location>
        <begin position="20"/>
        <end position="195"/>
    </location>
</feature>
<feature type="modified residue" description="Pros-8alpha-FAD histidine" evidence="1">
    <location>
        <position position="58"/>
    </location>
</feature>
<gene>
    <name type="primary">ALO1</name>
    <name type="ordered locus">CAGL0H04125g</name>
</gene>
<dbReference type="EC" id="1.1.3.37"/>
<dbReference type="EMBL" id="CR380954">
    <property type="protein sequence ID" value="CAG59907.1"/>
    <property type="molecule type" value="Genomic_DNA"/>
</dbReference>
<dbReference type="RefSeq" id="XP_446974.1">
    <property type="nucleotide sequence ID" value="XM_446974.1"/>
</dbReference>
<dbReference type="SMR" id="Q6FS20"/>
<dbReference type="FunCoup" id="Q6FS20">
    <property type="interactions" value="99"/>
</dbReference>
<dbReference type="STRING" id="284593.Q6FS20"/>
<dbReference type="EnsemblFungi" id="CAGL0H04125g-T">
    <property type="protein sequence ID" value="CAGL0H04125g-T-p1"/>
    <property type="gene ID" value="CAGL0H04125g"/>
</dbReference>
<dbReference type="KEGG" id="cgr:2888523"/>
<dbReference type="CGD" id="CAL0130238">
    <property type="gene designation" value="CAGL0H04125g"/>
</dbReference>
<dbReference type="VEuPathDB" id="FungiDB:CAGL0H04125g"/>
<dbReference type="eggNOG" id="KOG4730">
    <property type="taxonomic scope" value="Eukaryota"/>
</dbReference>
<dbReference type="HOGENOM" id="CLU_003896_4_1_1"/>
<dbReference type="InParanoid" id="Q6FS20"/>
<dbReference type="OMA" id="YPRFGEF"/>
<dbReference type="UniPathway" id="UPA00771">
    <property type="reaction ID" value="UER00766"/>
</dbReference>
<dbReference type="Proteomes" id="UP000002428">
    <property type="component" value="Chromosome H"/>
</dbReference>
<dbReference type="GO" id="GO:0032473">
    <property type="term" value="C:cytoplasmic side of mitochondrial outer membrane"/>
    <property type="evidence" value="ECO:0007669"/>
    <property type="project" value="EnsemblFungi"/>
</dbReference>
<dbReference type="GO" id="GO:0003885">
    <property type="term" value="F:D-arabinono-1,4-lactone oxidase activity"/>
    <property type="evidence" value="ECO:0007669"/>
    <property type="project" value="UniProtKB-EC"/>
</dbReference>
<dbReference type="GO" id="GO:0071949">
    <property type="term" value="F:FAD binding"/>
    <property type="evidence" value="ECO:0007669"/>
    <property type="project" value="InterPro"/>
</dbReference>
<dbReference type="GO" id="GO:0031489">
    <property type="term" value="F:myosin V binding"/>
    <property type="evidence" value="ECO:0007669"/>
    <property type="project" value="EnsemblFungi"/>
</dbReference>
<dbReference type="GO" id="GO:0034599">
    <property type="term" value="P:cellular response to oxidative stress"/>
    <property type="evidence" value="ECO:0007669"/>
    <property type="project" value="EnsemblFungi"/>
</dbReference>
<dbReference type="GO" id="GO:0070485">
    <property type="term" value="P:dehydro-D-arabinono-1,4-lactone biosynthetic process"/>
    <property type="evidence" value="ECO:0007669"/>
    <property type="project" value="EnsemblFungi"/>
</dbReference>
<dbReference type="GO" id="GO:0000001">
    <property type="term" value="P:mitochondrion inheritance"/>
    <property type="evidence" value="ECO:0007669"/>
    <property type="project" value="EnsemblFungi"/>
</dbReference>
<dbReference type="Gene3D" id="3.30.465.10">
    <property type="match status" value="1"/>
</dbReference>
<dbReference type="Gene3D" id="3.30.43.10">
    <property type="entry name" value="Uridine Diphospho-n-acetylenolpyruvylglucosamine Reductase, domain 2"/>
    <property type="match status" value="1"/>
</dbReference>
<dbReference type="InterPro" id="IPR007173">
    <property type="entry name" value="ALO_C"/>
</dbReference>
<dbReference type="InterPro" id="IPR016166">
    <property type="entry name" value="FAD-bd_PCMH"/>
</dbReference>
<dbReference type="InterPro" id="IPR036318">
    <property type="entry name" value="FAD-bd_PCMH-like_sf"/>
</dbReference>
<dbReference type="InterPro" id="IPR016167">
    <property type="entry name" value="FAD-bd_PCMH_sub1"/>
</dbReference>
<dbReference type="InterPro" id="IPR016169">
    <property type="entry name" value="FAD-bd_PCMH_sub2"/>
</dbReference>
<dbReference type="InterPro" id="IPR010031">
    <property type="entry name" value="FAD_lactone_oxidase-like"/>
</dbReference>
<dbReference type="InterPro" id="IPR006094">
    <property type="entry name" value="Oxid_FAD_bind_N"/>
</dbReference>
<dbReference type="InterPro" id="IPR006093">
    <property type="entry name" value="Oxy_OxRdtase_FAD_BS"/>
</dbReference>
<dbReference type="InterPro" id="IPR030654">
    <property type="entry name" value="Sugar_lactone_oxidase"/>
</dbReference>
<dbReference type="NCBIfam" id="TIGR01678">
    <property type="entry name" value="FAD_lactone_ox"/>
    <property type="match status" value="1"/>
</dbReference>
<dbReference type="PANTHER" id="PTHR43762:SF1">
    <property type="entry name" value="D-ARABINONO-1,4-LACTONE OXIDASE"/>
    <property type="match status" value="1"/>
</dbReference>
<dbReference type="PANTHER" id="PTHR43762">
    <property type="entry name" value="L-GULONOLACTONE OXIDASE"/>
    <property type="match status" value="1"/>
</dbReference>
<dbReference type="Pfam" id="PF04030">
    <property type="entry name" value="ALO"/>
    <property type="match status" value="1"/>
</dbReference>
<dbReference type="Pfam" id="PF01565">
    <property type="entry name" value="FAD_binding_4"/>
    <property type="match status" value="1"/>
</dbReference>
<dbReference type="PIRSF" id="PIRSF000136">
    <property type="entry name" value="LGO_GLO"/>
    <property type="match status" value="1"/>
</dbReference>
<dbReference type="SUPFAM" id="SSF56176">
    <property type="entry name" value="FAD-binding/transporter-associated domain-like"/>
    <property type="match status" value="1"/>
</dbReference>
<dbReference type="PROSITE" id="PS51387">
    <property type="entry name" value="FAD_PCMH"/>
    <property type="match status" value="1"/>
</dbReference>
<dbReference type="PROSITE" id="PS00862">
    <property type="entry name" value="OX2_COVAL_FAD"/>
    <property type="match status" value="1"/>
</dbReference>
<keyword id="KW-0274">FAD</keyword>
<keyword id="KW-0285">Flavoprotein</keyword>
<keyword id="KW-0472">Membrane</keyword>
<keyword id="KW-0496">Mitochondrion</keyword>
<keyword id="KW-0560">Oxidoreductase</keyword>
<keyword id="KW-1185">Reference proteome</keyword>
<accession>Q6FS20</accession>
<name>ALO_CANGA</name>